<protein>
    <recommendedName>
        <fullName>Major outer membrane protein P.IA</fullName>
        <shortName>PIA</shortName>
        <shortName>Protein IA</shortName>
    </recommendedName>
    <alternativeName>
        <fullName>Class 1 protein</fullName>
    </alternativeName>
</protein>
<sequence>MRKKLTALVLSALPLAAVADVSLYGEIKAGVEGRNIQAQLTEQPQVTNGVQGNQVKVTKAKSRIRTKISDFGSFIGFKGSEDLGEGLKAVWQLEQDVSVAGGGASQWGNRESFIGLAGEFGTLRAGRVANQFDDASQAINPWDSNNDVASQLGIFKRHDDMPVSVRYDSPEFSGFSGSVQFVPAQNSKSAYKPAYYTKDTNNNLTLVPAVVGKPGSDVYYAGLNYKNGGFAGNYAFKYARHANVGRNAFELFLIGSATSDEAKGTDPLKNHQVHRLTGGYEEGGLNLALAAQLDLSENGDKAKTKNSTTEIAATASYRFGNAVPRISYAHGFDLIERGKKGENTSYDQIIAGVDYDFSKRTSAIVSGAWLKRNTGIGNYTQINAASVGLRHKF</sequence>
<keyword id="KW-0002">3D-structure</keyword>
<keyword id="KW-0998">Cell outer membrane</keyword>
<keyword id="KW-0406">Ion transport</keyword>
<keyword id="KW-0472">Membrane</keyword>
<keyword id="KW-0626">Porin</keyword>
<keyword id="KW-0732">Signal</keyword>
<keyword id="KW-0812">Transmembrane</keyword>
<keyword id="KW-1134">Transmembrane beta strand</keyword>
<keyword id="KW-0813">Transport</keyword>
<organism>
    <name type="scientific">Neisseria meningitidis serogroup C</name>
    <dbReference type="NCBI Taxonomy" id="135720"/>
    <lineage>
        <taxon>Bacteria</taxon>
        <taxon>Pseudomonadati</taxon>
        <taxon>Pseudomonadota</taxon>
        <taxon>Betaproteobacteria</taxon>
        <taxon>Neisseriales</taxon>
        <taxon>Neisseriaceae</taxon>
        <taxon>Neisseria</taxon>
    </lineage>
</organism>
<gene>
    <name type="primary">porA</name>
</gene>
<reference key="1">
    <citation type="journal article" date="1989" name="Mol. Microbiol.">
        <title>The class 1 outer membrane protein of Neisseria meningitidis: gene sequence and structural and immunological similarities to gonococcal porins.</title>
        <authorList>
            <person name="Barlow A.K."/>
            <person name="Heckels J.E."/>
            <person name="Clarke I.N."/>
        </authorList>
    </citation>
    <scope>NUCLEOTIDE SEQUENCE [GENOMIC DNA]</scope>
    <source>
        <strain>MC50 / Serogroup C / Type NT / Subtype 16</strain>
    </source>
</reference>
<accession>P13415</accession>
<dbReference type="EMBL" id="X12899">
    <property type="protein sequence ID" value="CAA31385.1"/>
    <property type="molecule type" value="Genomic_DNA"/>
</dbReference>
<dbReference type="PIR" id="S04161">
    <property type="entry name" value="S04161"/>
</dbReference>
<dbReference type="PDB" id="5NQP">
    <property type="method" value="X-ray"/>
    <property type="resolution" value="2.86 A"/>
    <property type="chains" value="A/B/C=195-208"/>
</dbReference>
<dbReference type="PDB" id="5NQX">
    <property type="method" value="X-ray"/>
    <property type="resolution" value="3.66 A"/>
    <property type="chains" value="A/B/C/D/E=195-207"/>
</dbReference>
<dbReference type="PDB" id="5NQY">
    <property type="method" value="X-ray"/>
    <property type="resolution" value="2.60 A"/>
    <property type="chains" value="A=195-208"/>
</dbReference>
<dbReference type="PDB" id="5NQZ">
    <property type="method" value="X-ray"/>
    <property type="resolution" value="1.63 A"/>
    <property type="chains" value="A/B=195-206"/>
</dbReference>
<dbReference type="PDBsum" id="5NQP"/>
<dbReference type="PDBsum" id="5NQX"/>
<dbReference type="PDBsum" id="5NQY"/>
<dbReference type="PDBsum" id="5NQZ"/>
<dbReference type="SMR" id="P13415"/>
<dbReference type="GO" id="GO:0009279">
    <property type="term" value="C:cell outer membrane"/>
    <property type="evidence" value="ECO:0007669"/>
    <property type="project" value="UniProtKB-SubCell"/>
</dbReference>
<dbReference type="GO" id="GO:0046930">
    <property type="term" value="C:pore complex"/>
    <property type="evidence" value="ECO:0007669"/>
    <property type="project" value="UniProtKB-KW"/>
</dbReference>
<dbReference type="GO" id="GO:0015288">
    <property type="term" value="F:porin activity"/>
    <property type="evidence" value="ECO:0007669"/>
    <property type="project" value="UniProtKB-KW"/>
</dbReference>
<dbReference type="GO" id="GO:0034220">
    <property type="term" value="P:monoatomic ion transmembrane transport"/>
    <property type="evidence" value="ECO:0007669"/>
    <property type="project" value="InterPro"/>
</dbReference>
<dbReference type="CDD" id="cd00342">
    <property type="entry name" value="gram_neg_porins"/>
    <property type="match status" value="1"/>
</dbReference>
<dbReference type="Gene3D" id="2.40.160.10">
    <property type="entry name" value="Porin"/>
    <property type="match status" value="1"/>
</dbReference>
<dbReference type="InterPro" id="IPR050298">
    <property type="entry name" value="Gram-neg_bact_OMP"/>
</dbReference>
<dbReference type="InterPro" id="IPR033900">
    <property type="entry name" value="Gram_neg_porin_domain"/>
</dbReference>
<dbReference type="InterPro" id="IPR023614">
    <property type="entry name" value="Porin_dom_sf"/>
</dbReference>
<dbReference type="InterPro" id="IPR001702">
    <property type="entry name" value="Porin_Gram-ve"/>
</dbReference>
<dbReference type="InterPro" id="IPR013793">
    <property type="entry name" value="Porin_Gram-ve_CS"/>
</dbReference>
<dbReference type="InterPro" id="IPR002299">
    <property type="entry name" value="Porin_Neis"/>
</dbReference>
<dbReference type="PANTHER" id="PTHR34501:SF9">
    <property type="entry name" value="MAJOR OUTER MEMBRANE PROTEIN P.IA"/>
    <property type="match status" value="1"/>
</dbReference>
<dbReference type="PANTHER" id="PTHR34501">
    <property type="entry name" value="PROTEIN YDDL-RELATED"/>
    <property type="match status" value="1"/>
</dbReference>
<dbReference type="Pfam" id="PF00267">
    <property type="entry name" value="Porin_1"/>
    <property type="match status" value="1"/>
</dbReference>
<dbReference type="PRINTS" id="PR00182">
    <property type="entry name" value="ECOLNEIPORIN"/>
</dbReference>
<dbReference type="PRINTS" id="PR00184">
    <property type="entry name" value="NEISSPPORIN"/>
</dbReference>
<dbReference type="SUPFAM" id="SSF56935">
    <property type="entry name" value="Porins"/>
    <property type="match status" value="1"/>
</dbReference>
<dbReference type="PROSITE" id="PS00576">
    <property type="entry name" value="GRAM_NEG_PORIN"/>
    <property type="match status" value="1"/>
</dbReference>
<name>OMPA1_NEIMC</name>
<comment type="function">
    <text>Serves as a slightly cation selective porin. Major antigen on the gonococcal cell surface and it may have pathogenic properties in addition to its porin activity.</text>
</comment>
<comment type="subunit">
    <text>Homotrimer.</text>
</comment>
<comment type="subcellular location">
    <subcellularLocation>
        <location>Cell outer membrane</location>
        <topology>Multi-pass membrane protein</topology>
    </subcellularLocation>
</comment>
<comment type="similarity">
    <text evidence="1">Belongs to the Gram-negative porin family.</text>
</comment>
<evidence type="ECO:0000305" key="1"/>
<evidence type="ECO:0007829" key="2">
    <source>
        <dbReference type="PDB" id="5NQP"/>
    </source>
</evidence>
<evidence type="ECO:0007829" key="3">
    <source>
        <dbReference type="PDB" id="5NQY"/>
    </source>
</evidence>
<feature type="signal peptide">
    <location>
        <begin position="1"/>
        <end position="19"/>
    </location>
</feature>
<feature type="chain" id="PRO_0000025275" description="Major outer membrane protein P.IA">
    <location>
        <begin position="20"/>
        <end position="393"/>
    </location>
</feature>
<feature type="strand" evidence="3">
    <location>
        <begin position="195"/>
        <end position="198"/>
    </location>
</feature>
<feature type="strand" evidence="2">
    <location>
        <begin position="200"/>
        <end position="202"/>
    </location>
</feature>
<feature type="strand" evidence="3">
    <location>
        <begin position="204"/>
        <end position="208"/>
    </location>
</feature>
<proteinExistence type="evidence at protein level"/>